<sequence>MNDITVTLPDGSELSVPADATVEDVAYEIGPGLGRDTIAGVVDGELVDATTSVYNDARVVIVTEQSDEYQRVLRHSAAHVFAQALQREYPDAKLTIGPPTDDGFYYDIASVDLDENDLETIETEMEAIIDADIPITQQYQSREEAFSKYENNPYKCDILETEAADEDPVSFYIQDDFEDLCQGPHVDSTGEIGAITLLNISSAYWRGDEDNDTLTRVYGAAFESESELESFLERRKKAKERDHRKIGQELDLFSIPDITGPGLPLYHPDGKKILNELSSFARSLNLEAGYEPVETPHLFRTELWKQSGHYENYVDDMFLLDVSDEEYGLKPMNCPGHATIFDQHSWSYRDLPVRYFEDGKVYRKEQRGELSGLSRVWSFTIDDGHLFCQPEQIEQEVTHVMDAIYSVLDTFGLEAHVALATRPEKSVGGDEIWENAETQLRSVLESQNIDYDLEPGDGAFYGPKIDFAFEDALGRQWDGPTVQLDFNMPDRFELTYTGEDNTDHQPVMIHRALYGSYERFFMVLIEHFNGKFPLWLAPDQVRILPISDDQLGYAHRIKNELSDFRVSIEDRAWTLGRKIRAAQEERVPYMIIIGDDEVSTETISVRDRKEREKQDVDLSTFHSHLKSEYENKRLEPDFIDMN</sequence>
<name>SYT_HALWD</name>
<reference key="1">
    <citation type="journal article" date="2006" name="BMC Genomics">
        <title>The genome of the square archaeon Haloquadratum walsbyi: life at the limits of water activity.</title>
        <authorList>
            <person name="Bolhuis H."/>
            <person name="Palm P."/>
            <person name="Wende A."/>
            <person name="Falb M."/>
            <person name="Rampp M."/>
            <person name="Rodriguez-Valera F."/>
            <person name="Pfeiffer F."/>
            <person name="Oesterhelt D."/>
        </authorList>
    </citation>
    <scope>NUCLEOTIDE SEQUENCE [LARGE SCALE GENOMIC DNA]</scope>
    <source>
        <strain>DSM 16790 / HBSQ001</strain>
    </source>
</reference>
<gene>
    <name evidence="1" type="primary">thrS</name>
    <name type="ordered locus">HQ_2579A</name>
</gene>
<feature type="chain" id="PRO_1000020403" description="Threonine--tRNA ligase">
    <location>
        <begin position="1"/>
        <end position="642"/>
    </location>
</feature>
<feature type="domain" description="TGS" evidence="2">
    <location>
        <begin position="1"/>
        <end position="63"/>
    </location>
</feature>
<feature type="region of interest" description="Catalytic" evidence="1">
    <location>
        <begin position="242"/>
        <end position="533"/>
    </location>
</feature>
<feature type="binding site" evidence="1">
    <location>
        <position position="334"/>
    </location>
    <ligand>
        <name>Zn(2+)</name>
        <dbReference type="ChEBI" id="CHEBI:29105"/>
    </ligand>
</feature>
<feature type="binding site" evidence="1">
    <location>
        <position position="385"/>
    </location>
    <ligand>
        <name>Zn(2+)</name>
        <dbReference type="ChEBI" id="CHEBI:29105"/>
    </ligand>
</feature>
<feature type="binding site" evidence="1">
    <location>
        <position position="510"/>
    </location>
    <ligand>
        <name>Zn(2+)</name>
        <dbReference type="ChEBI" id="CHEBI:29105"/>
    </ligand>
</feature>
<protein>
    <recommendedName>
        <fullName evidence="1">Threonine--tRNA ligase</fullName>
        <ecNumber evidence="1">6.1.1.3</ecNumber>
    </recommendedName>
    <alternativeName>
        <fullName evidence="1">Threonyl-tRNA synthetase</fullName>
        <shortName evidence="1">ThrRS</shortName>
    </alternativeName>
</protein>
<accession>Q18H54</accession>
<evidence type="ECO:0000255" key="1">
    <source>
        <dbReference type="HAMAP-Rule" id="MF_00184"/>
    </source>
</evidence>
<evidence type="ECO:0000255" key="2">
    <source>
        <dbReference type="PROSITE-ProRule" id="PRU01228"/>
    </source>
</evidence>
<proteinExistence type="inferred from homology"/>
<organism>
    <name type="scientific">Haloquadratum walsbyi (strain DSM 16790 / HBSQ001)</name>
    <dbReference type="NCBI Taxonomy" id="362976"/>
    <lineage>
        <taxon>Archaea</taxon>
        <taxon>Methanobacteriati</taxon>
        <taxon>Methanobacteriota</taxon>
        <taxon>Stenosarchaea group</taxon>
        <taxon>Halobacteria</taxon>
        <taxon>Halobacteriales</taxon>
        <taxon>Haloferacaceae</taxon>
        <taxon>Haloquadratum</taxon>
    </lineage>
</organism>
<comment type="function">
    <text evidence="1">Catalyzes the attachment of threonine to tRNA(Thr) in a two-step reaction: L-threonine is first activated by ATP to form Thr-AMP and then transferred to the acceptor end of tRNA(Thr).</text>
</comment>
<comment type="catalytic activity">
    <reaction evidence="1">
        <text>tRNA(Thr) + L-threonine + ATP = L-threonyl-tRNA(Thr) + AMP + diphosphate + H(+)</text>
        <dbReference type="Rhea" id="RHEA:24624"/>
        <dbReference type="Rhea" id="RHEA-COMP:9670"/>
        <dbReference type="Rhea" id="RHEA-COMP:9704"/>
        <dbReference type="ChEBI" id="CHEBI:15378"/>
        <dbReference type="ChEBI" id="CHEBI:30616"/>
        <dbReference type="ChEBI" id="CHEBI:33019"/>
        <dbReference type="ChEBI" id="CHEBI:57926"/>
        <dbReference type="ChEBI" id="CHEBI:78442"/>
        <dbReference type="ChEBI" id="CHEBI:78534"/>
        <dbReference type="ChEBI" id="CHEBI:456215"/>
        <dbReference type="EC" id="6.1.1.3"/>
    </reaction>
</comment>
<comment type="cofactor">
    <cofactor evidence="1">
        <name>Zn(2+)</name>
        <dbReference type="ChEBI" id="CHEBI:29105"/>
    </cofactor>
    <text evidence="1">Binds 1 zinc ion per subunit.</text>
</comment>
<comment type="subunit">
    <text evidence="1">Homodimer.</text>
</comment>
<comment type="subcellular location">
    <subcellularLocation>
        <location evidence="1">Cytoplasm</location>
    </subcellularLocation>
</comment>
<comment type="similarity">
    <text evidence="1">Belongs to the class-II aminoacyl-tRNA synthetase family.</text>
</comment>
<keyword id="KW-0030">Aminoacyl-tRNA synthetase</keyword>
<keyword id="KW-0067">ATP-binding</keyword>
<keyword id="KW-0963">Cytoplasm</keyword>
<keyword id="KW-0436">Ligase</keyword>
<keyword id="KW-0479">Metal-binding</keyword>
<keyword id="KW-0547">Nucleotide-binding</keyword>
<keyword id="KW-0648">Protein biosynthesis</keyword>
<keyword id="KW-1185">Reference proteome</keyword>
<keyword id="KW-0694">RNA-binding</keyword>
<keyword id="KW-0820">tRNA-binding</keyword>
<keyword id="KW-0862">Zinc</keyword>
<dbReference type="EC" id="6.1.1.3" evidence="1"/>
<dbReference type="EMBL" id="AM180088">
    <property type="protein sequence ID" value="CAJ52691.1"/>
    <property type="molecule type" value="Genomic_DNA"/>
</dbReference>
<dbReference type="RefSeq" id="WP_011571807.1">
    <property type="nucleotide sequence ID" value="NC_008212.1"/>
</dbReference>
<dbReference type="SMR" id="Q18H54"/>
<dbReference type="STRING" id="362976.HQ_2579A"/>
<dbReference type="GeneID" id="4194773"/>
<dbReference type="KEGG" id="hwa:HQ_2579A"/>
<dbReference type="eggNOG" id="arCOG00401">
    <property type="taxonomic scope" value="Archaea"/>
</dbReference>
<dbReference type="HOGENOM" id="CLU_008554_0_1_2"/>
<dbReference type="Proteomes" id="UP000001975">
    <property type="component" value="Chromosome"/>
</dbReference>
<dbReference type="GO" id="GO:0005737">
    <property type="term" value="C:cytoplasm"/>
    <property type="evidence" value="ECO:0007669"/>
    <property type="project" value="UniProtKB-SubCell"/>
</dbReference>
<dbReference type="GO" id="GO:0002161">
    <property type="term" value="F:aminoacyl-tRNA deacylase activity"/>
    <property type="evidence" value="ECO:0007669"/>
    <property type="project" value="UniProtKB-ARBA"/>
</dbReference>
<dbReference type="GO" id="GO:0005524">
    <property type="term" value="F:ATP binding"/>
    <property type="evidence" value="ECO:0007669"/>
    <property type="project" value="UniProtKB-UniRule"/>
</dbReference>
<dbReference type="GO" id="GO:0046872">
    <property type="term" value="F:metal ion binding"/>
    <property type="evidence" value="ECO:0007669"/>
    <property type="project" value="UniProtKB-KW"/>
</dbReference>
<dbReference type="GO" id="GO:0004829">
    <property type="term" value="F:threonine-tRNA ligase activity"/>
    <property type="evidence" value="ECO:0007669"/>
    <property type="project" value="UniProtKB-UniRule"/>
</dbReference>
<dbReference type="GO" id="GO:0000049">
    <property type="term" value="F:tRNA binding"/>
    <property type="evidence" value="ECO:0007669"/>
    <property type="project" value="UniProtKB-KW"/>
</dbReference>
<dbReference type="GO" id="GO:0006435">
    <property type="term" value="P:threonyl-tRNA aminoacylation"/>
    <property type="evidence" value="ECO:0007669"/>
    <property type="project" value="UniProtKB-UniRule"/>
</dbReference>
<dbReference type="CDD" id="cd01667">
    <property type="entry name" value="TGS_ThrRS"/>
    <property type="match status" value="1"/>
</dbReference>
<dbReference type="CDD" id="cd00860">
    <property type="entry name" value="ThrRS_anticodon"/>
    <property type="match status" value="1"/>
</dbReference>
<dbReference type="CDD" id="cd00771">
    <property type="entry name" value="ThrRS_core"/>
    <property type="match status" value="1"/>
</dbReference>
<dbReference type="FunFam" id="3.30.930.10:FF:000002">
    <property type="entry name" value="Threonine--tRNA ligase"/>
    <property type="match status" value="1"/>
</dbReference>
<dbReference type="FunFam" id="3.40.50.800:FF:000001">
    <property type="entry name" value="Threonine--tRNA ligase"/>
    <property type="match status" value="1"/>
</dbReference>
<dbReference type="FunFam" id="3.30.980.10:FF:000005">
    <property type="entry name" value="Threonyl-tRNA synthetase, mitochondrial"/>
    <property type="match status" value="1"/>
</dbReference>
<dbReference type="Gene3D" id="3.10.20.30">
    <property type="match status" value="1"/>
</dbReference>
<dbReference type="Gene3D" id="3.30.54.20">
    <property type="match status" value="1"/>
</dbReference>
<dbReference type="Gene3D" id="3.40.50.800">
    <property type="entry name" value="Anticodon-binding domain"/>
    <property type="match status" value="1"/>
</dbReference>
<dbReference type="Gene3D" id="3.30.930.10">
    <property type="entry name" value="Bira Bifunctional Protein, Domain 2"/>
    <property type="match status" value="1"/>
</dbReference>
<dbReference type="Gene3D" id="3.30.980.10">
    <property type="entry name" value="Threonyl-trna Synthetase, Chain A, domain 2"/>
    <property type="match status" value="1"/>
</dbReference>
<dbReference type="HAMAP" id="MF_00184">
    <property type="entry name" value="Thr_tRNA_synth"/>
    <property type="match status" value="1"/>
</dbReference>
<dbReference type="InterPro" id="IPR002314">
    <property type="entry name" value="aa-tRNA-synt_IIb"/>
</dbReference>
<dbReference type="InterPro" id="IPR006195">
    <property type="entry name" value="aa-tRNA-synth_II"/>
</dbReference>
<dbReference type="InterPro" id="IPR045864">
    <property type="entry name" value="aa-tRNA-synth_II/BPL/LPL"/>
</dbReference>
<dbReference type="InterPro" id="IPR004154">
    <property type="entry name" value="Anticodon-bd"/>
</dbReference>
<dbReference type="InterPro" id="IPR036621">
    <property type="entry name" value="Anticodon-bd_dom_sf"/>
</dbReference>
<dbReference type="InterPro" id="IPR012675">
    <property type="entry name" value="Beta-grasp_dom_sf"/>
</dbReference>
<dbReference type="InterPro" id="IPR004095">
    <property type="entry name" value="TGS"/>
</dbReference>
<dbReference type="InterPro" id="IPR012676">
    <property type="entry name" value="TGS-like"/>
</dbReference>
<dbReference type="InterPro" id="IPR002320">
    <property type="entry name" value="Thr-tRNA-ligase_IIa"/>
</dbReference>
<dbReference type="InterPro" id="IPR018163">
    <property type="entry name" value="Thr/Ala-tRNA-synth_IIc_edit"/>
</dbReference>
<dbReference type="InterPro" id="IPR047246">
    <property type="entry name" value="ThrRS_anticodon"/>
</dbReference>
<dbReference type="InterPro" id="IPR033728">
    <property type="entry name" value="ThrRS_core"/>
</dbReference>
<dbReference type="InterPro" id="IPR012947">
    <property type="entry name" value="tRNA_SAD"/>
</dbReference>
<dbReference type="NCBIfam" id="TIGR00418">
    <property type="entry name" value="thrS"/>
    <property type="match status" value="1"/>
</dbReference>
<dbReference type="PANTHER" id="PTHR11451:SF44">
    <property type="entry name" value="THREONINE--TRNA LIGASE, CHLOROPLASTIC_MITOCHONDRIAL 2"/>
    <property type="match status" value="1"/>
</dbReference>
<dbReference type="PANTHER" id="PTHR11451">
    <property type="entry name" value="THREONINE-TRNA LIGASE"/>
    <property type="match status" value="1"/>
</dbReference>
<dbReference type="Pfam" id="PF03129">
    <property type="entry name" value="HGTP_anticodon"/>
    <property type="match status" value="1"/>
</dbReference>
<dbReference type="Pfam" id="PF02824">
    <property type="entry name" value="TGS"/>
    <property type="match status" value="1"/>
</dbReference>
<dbReference type="Pfam" id="PF00587">
    <property type="entry name" value="tRNA-synt_2b"/>
    <property type="match status" value="1"/>
</dbReference>
<dbReference type="Pfam" id="PF07973">
    <property type="entry name" value="tRNA_SAD"/>
    <property type="match status" value="1"/>
</dbReference>
<dbReference type="PRINTS" id="PR01047">
    <property type="entry name" value="TRNASYNTHTHR"/>
</dbReference>
<dbReference type="SMART" id="SM00863">
    <property type="entry name" value="tRNA_SAD"/>
    <property type="match status" value="1"/>
</dbReference>
<dbReference type="SUPFAM" id="SSF52954">
    <property type="entry name" value="Class II aaRS ABD-related"/>
    <property type="match status" value="1"/>
</dbReference>
<dbReference type="SUPFAM" id="SSF55681">
    <property type="entry name" value="Class II aaRS and biotin synthetases"/>
    <property type="match status" value="1"/>
</dbReference>
<dbReference type="SUPFAM" id="SSF81271">
    <property type="entry name" value="TGS-like"/>
    <property type="match status" value="1"/>
</dbReference>
<dbReference type="SUPFAM" id="SSF55186">
    <property type="entry name" value="ThrRS/AlaRS common domain"/>
    <property type="match status" value="1"/>
</dbReference>
<dbReference type="PROSITE" id="PS50862">
    <property type="entry name" value="AA_TRNA_LIGASE_II"/>
    <property type="match status" value="1"/>
</dbReference>
<dbReference type="PROSITE" id="PS51880">
    <property type="entry name" value="TGS"/>
    <property type="match status" value="1"/>
</dbReference>